<gene>
    <name evidence="7" type="primary">KIN4A</name>
</gene>
<proteinExistence type="evidence at transcript level"/>
<comment type="function">
    <text evidence="1">Kinesin-like motor protein involved in the control of the oriented deposition of cellulose microfibrils.</text>
</comment>
<comment type="subunit">
    <text evidence="1">Homodimer.</text>
</comment>
<comment type="subcellular location">
    <subcellularLocation>
        <location evidence="5">Cytoplasm</location>
    </subcellularLocation>
    <text evidence="5">Localizes with vesicle-like structures associated with cortical microtubules (PubMed:25600279).</text>
</comment>
<comment type="tissue specificity">
    <text evidence="5">Expressed in cotton fibers.</text>
</comment>
<comment type="domain">
    <text evidence="1">Composed of an N-terminal domain which is responsible for the motor activity of kinesin (it hydrolyzes ATP and binds microtubule) and a central to C-terminal alpha-helical coiled coil domain that mediates the heavy chain dimerization.</text>
</comment>
<comment type="similarity">
    <text evidence="7">Belongs to the TRAFAC class myosin-kinesin ATPase superfamily. Kinesin family. KIN-4 subfamily.</text>
</comment>
<evidence type="ECO:0000250" key="1">
    <source>
        <dbReference type="UniProtKB" id="Q8GS71"/>
    </source>
</evidence>
<evidence type="ECO:0000255" key="2"/>
<evidence type="ECO:0000255" key="3">
    <source>
        <dbReference type="PROSITE-ProRule" id="PRU00283"/>
    </source>
</evidence>
<evidence type="ECO:0000256" key="4">
    <source>
        <dbReference type="SAM" id="MobiDB-lite"/>
    </source>
</evidence>
<evidence type="ECO:0000269" key="5">
    <source>
    </source>
</evidence>
<evidence type="ECO:0000303" key="6">
    <source>
    </source>
</evidence>
<evidence type="ECO:0000305" key="7"/>
<dbReference type="EMBL" id="KJ701508">
    <property type="protein sequence ID" value="AID65991.1"/>
    <property type="molecule type" value="mRNA"/>
</dbReference>
<dbReference type="RefSeq" id="NP_001314069.1">
    <property type="nucleotide sequence ID" value="NM_001327140.1"/>
</dbReference>
<dbReference type="RefSeq" id="XP_016702813.1">
    <property type="nucleotide sequence ID" value="XM_016847324.1"/>
</dbReference>
<dbReference type="RefSeq" id="XP_016702814.1">
    <property type="nucleotide sequence ID" value="XM_016847325.1"/>
</dbReference>
<dbReference type="SMR" id="A0A068FIK2"/>
<dbReference type="STRING" id="3635.A0A068FIK2"/>
<dbReference type="PaxDb" id="3635-A0A068FIK2"/>
<dbReference type="GeneID" id="107917911"/>
<dbReference type="KEGG" id="ghi:107917911"/>
<dbReference type="OMA" id="MSPSARM"/>
<dbReference type="OrthoDB" id="33190at41938"/>
<dbReference type="Proteomes" id="UP000189702">
    <property type="component" value="Chromosome 23"/>
</dbReference>
<dbReference type="GO" id="GO:0055028">
    <property type="term" value="C:cortical microtubule"/>
    <property type="evidence" value="ECO:0000314"/>
    <property type="project" value="UniProtKB"/>
</dbReference>
<dbReference type="GO" id="GO:0005737">
    <property type="term" value="C:cytoplasm"/>
    <property type="evidence" value="ECO:0000314"/>
    <property type="project" value="UniProtKB"/>
</dbReference>
<dbReference type="GO" id="GO:0005875">
    <property type="term" value="C:microtubule associated complex"/>
    <property type="evidence" value="ECO:0000318"/>
    <property type="project" value="GO_Central"/>
</dbReference>
<dbReference type="GO" id="GO:0005524">
    <property type="term" value="F:ATP binding"/>
    <property type="evidence" value="ECO:0007669"/>
    <property type="project" value="UniProtKB-KW"/>
</dbReference>
<dbReference type="GO" id="GO:0008017">
    <property type="term" value="F:microtubule binding"/>
    <property type="evidence" value="ECO:0007669"/>
    <property type="project" value="InterPro"/>
</dbReference>
<dbReference type="GO" id="GO:0003777">
    <property type="term" value="F:microtubule motor activity"/>
    <property type="evidence" value="ECO:0000318"/>
    <property type="project" value="GO_Central"/>
</dbReference>
<dbReference type="GO" id="GO:0071555">
    <property type="term" value="P:cell wall organization"/>
    <property type="evidence" value="ECO:0007669"/>
    <property type="project" value="UniProtKB-KW"/>
</dbReference>
<dbReference type="GO" id="GO:0007018">
    <property type="term" value="P:microtubule-based movement"/>
    <property type="evidence" value="ECO:0007669"/>
    <property type="project" value="InterPro"/>
</dbReference>
<dbReference type="GO" id="GO:0007052">
    <property type="term" value="P:mitotic spindle organization"/>
    <property type="evidence" value="ECO:0000318"/>
    <property type="project" value="GO_Central"/>
</dbReference>
<dbReference type="GO" id="GO:0051231">
    <property type="term" value="P:spindle elongation"/>
    <property type="evidence" value="ECO:0000318"/>
    <property type="project" value="GO_Central"/>
</dbReference>
<dbReference type="CDD" id="cd01372">
    <property type="entry name" value="KISc_KIF4"/>
    <property type="match status" value="1"/>
</dbReference>
<dbReference type="FunFam" id="3.40.850.10:FF:000032">
    <property type="entry name" value="kinesin-like protein KIN-4A isoform X1"/>
    <property type="match status" value="1"/>
</dbReference>
<dbReference type="Gene3D" id="3.40.850.10">
    <property type="entry name" value="Kinesin motor domain"/>
    <property type="match status" value="1"/>
</dbReference>
<dbReference type="InterPro" id="IPR027640">
    <property type="entry name" value="Kinesin-like_fam"/>
</dbReference>
<dbReference type="InterPro" id="IPR019821">
    <property type="entry name" value="Kinesin_motor_CS"/>
</dbReference>
<dbReference type="InterPro" id="IPR001752">
    <property type="entry name" value="Kinesin_motor_dom"/>
</dbReference>
<dbReference type="InterPro" id="IPR036961">
    <property type="entry name" value="Kinesin_motor_dom_sf"/>
</dbReference>
<dbReference type="InterPro" id="IPR027417">
    <property type="entry name" value="P-loop_NTPase"/>
</dbReference>
<dbReference type="PANTHER" id="PTHR47969">
    <property type="entry name" value="CHROMOSOME-ASSOCIATED KINESIN KIF4A-RELATED"/>
    <property type="match status" value="1"/>
</dbReference>
<dbReference type="PANTHER" id="PTHR47969:SF15">
    <property type="entry name" value="CHROMOSOME-ASSOCIATED KINESIN KIF4A-RELATED"/>
    <property type="match status" value="1"/>
</dbReference>
<dbReference type="Pfam" id="PF00225">
    <property type="entry name" value="Kinesin"/>
    <property type="match status" value="1"/>
</dbReference>
<dbReference type="PRINTS" id="PR00380">
    <property type="entry name" value="KINESINHEAVY"/>
</dbReference>
<dbReference type="SMART" id="SM00129">
    <property type="entry name" value="KISc"/>
    <property type="match status" value="1"/>
</dbReference>
<dbReference type="SUPFAM" id="SSF52540">
    <property type="entry name" value="P-loop containing nucleoside triphosphate hydrolases"/>
    <property type="match status" value="1"/>
</dbReference>
<dbReference type="PROSITE" id="PS00411">
    <property type="entry name" value="KINESIN_MOTOR_1"/>
    <property type="match status" value="1"/>
</dbReference>
<dbReference type="PROSITE" id="PS50067">
    <property type="entry name" value="KINESIN_MOTOR_2"/>
    <property type="match status" value="1"/>
</dbReference>
<reference key="1">
    <citation type="submission" date="2014-04" db="EMBL/GenBank/DDBJ databases">
        <authorList>
            <person name="Liu B."/>
        </authorList>
    </citation>
    <scope>NUCLEOTIDE SEQUENCE [MRNA]</scope>
    <source>
        <strain>cv. Acala SJ2</strain>
    </source>
</reference>
<reference key="2">
    <citation type="journal article" date="2015" name="Mol. Plant">
        <title>Kinesin-4 functions in vesicular transport on cortical microtubules and regulates cell wall mechanics during cell elongation in plants.</title>
        <authorList>
            <person name="Kong Z."/>
            <person name="Ioki M."/>
            <person name="Braybrook S."/>
            <person name="Li S."/>
            <person name="Ye Z.H."/>
            <person name="Julie Lee Y.R."/>
            <person name="Hotta T."/>
            <person name="Chang A."/>
            <person name="Tian J."/>
            <person name="Wang G."/>
            <person name="Liu B."/>
        </authorList>
    </citation>
    <scope>TISSUE SPECIFICITY</scope>
    <scope>SUBCELLULAR LOCATION</scope>
</reference>
<name>KN4A_GOSHI</name>
<sequence length="1033" mass="116357">MEVGGGSEECCVKVAVHVRPLIGDEKVQGCKDCVTVIPGKPQVQIGTHSFTFDHVYGSTSSPSWMFEECIVPLVDGLFQGYNATVLAYGQTGSGKTYTMGTGFKGGSQTGIIPQVMNALFSKIENLKHQIEFQLHVSFIEILKEEVRDLLDPTFLNKSDTASANTGKVNVPGKPPIQIRESSDGVITLAGSTEVSVSTLKEMGACLEQGSLSRATGSTNMNNQSSRSHAIFTITLEQMRKLNPVSGDGNPNDSMSEEYLCAKLHLVDLAGSERAKRTGSDGMRFKEGVHINKGLLALGNVISALGDEKKRKEGVHVPYRDSKLTRLLQDSLGGNSRTVMIACISPADINAEETLNTLKYANRARNIQNKPVVNRDPMSNEILKMRQQLEYLQAELCARGGSGEVQVLNERIAWLEAANEDLCRELYEYRSRCTIVEQREMDAQDGSPCSVESDGLKRNLRSRESRDNQIVETMIGGDSREIEEGAAKEWEHMLLQNTMDKELHELNRQLEEKESEMKVFGGHTVALKQHFGKKIQELEEEKRAVQQERDRLLAEIENLSAGSEGQALKVHDIHAQKLKSLEAQIMDLKKKQENQVQLLKKKQKSDEAAKRLQDEIQYIKAQKVQLQHRIKQEAEQFRQWKASREKELLQLRKEGRRNEYERHKLQALNQRQKLVLQRKTEEAAMATKRLKELLEARKSAARDNLAIANGNGTNGKINEKGLQRWLDHELEVMVNVHEVRFEYEKQSQVRAALAEELAVLKQVDELDSKGPSPSRGKNGCARGSSLSPNARVARISSLEHMLGISSNSLVAMASQLSEAEERERAFTNRGRWNQLRSMGDAKNLLQYMFNSLGDSRYQLWEKGIEIREMKEQLKELVGLLRQSELQRKEVENELKLREQAVAIALATSATGNSPISLKHIDDDVKSSSSPMSVPAQKQLKYSPGIVNGPARESAAFIGQTRKMIPLGQLPMKNLVANGQAGNGKLWRWKRSHHQWLVQFKWKWQKPWRLSEWIRHSDETIIRARPRSQVLTYRV</sequence>
<protein>
    <recommendedName>
        <fullName evidence="7">Kinesin-like protein KIN-4A</fullName>
    </recommendedName>
    <alternativeName>
        <fullName evidence="6">GhKINESIN-4A</fullName>
    </alternativeName>
</protein>
<keyword id="KW-0067">ATP-binding</keyword>
<keyword id="KW-0961">Cell wall biogenesis/degradation</keyword>
<keyword id="KW-0175">Coiled coil</keyword>
<keyword id="KW-0963">Cytoplasm</keyword>
<keyword id="KW-0493">Microtubule</keyword>
<keyword id="KW-0505">Motor protein</keyword>
<keyword id="KW-0547">Nucleotide-binding</keyword>
<keyword id="KW-1185">Reference proteome</keyword>
<organism>
    <name type="scientific">Gossypium hirsutum</name>
    <name type="common">Upland cotton</name>
    <name type="synonym">Gossypium mexicanum</name>
    <dbReference type="NCBI Taxonomy" id="3635"/>
    <lineage>
        <taxon>Eukaryota</taxon>
        <taxon>Viridiplantae</taxon>
        <taxon>Streptophyta</taxon>
        <taxon>Embryophyta</taxon>
        <taxon>Tracheophyta</taxon>
        <taxon>Spermatophyta</taxon>
        <taxon>Magnoliopsida</taxon>
        <taxon>eudicotyledons</taxon>
        <taxon>Gunneridae</taxon>
        <taxon>Pentapetalae</taxon>
        <taxon>rosids</taxon>
        <taxon>malvids</taxon>
        <taxon>Malvales</taxon>
        <taxon>Malvaceae</taxon>
        <taxon>Malvoideae</taxon>
        <taxon>Gossypium</taxon>
    </lineage>
</organism>
<feature type="chain" id="PRO_0000436187" description="Kinesin-like protein KIN-4A">
    <location>
        <begin position="1"/>
        <end position="1033"/>
    </location>
</feature>
<feature type="domain" description="Kinesin motor" evidence="3">
    <location>
        <begin position="11"/>
        <end position="366"/>
    </location>
</feature>
<feature type="region of interest" description="Disordered" evidence="4">
    <location>
        <begin position="443"/>
        <end position="462"/>
    </location>
</feature>
<feature type="region of interest" description="Disordered" evidence="4">
    <location>
        <begin position="763"/>
        <end position="785"/>
    </location>
</feature>
<feature type="coiled-coil region" evidence="2">
    <location>
        <begin position="525"/>
        <end position="638"/>
    </location>
</feature>
<feature type="coiled-coil region" evidence="2">
    <location>
        <begin position="863"/>
        <end position="895"/>
    </location>
</feature>
<feature type="compositionally biased region" description="Basic and acidic residues" evidence="4">
    <location>
        <begin position="453"/>
        <end position="462"/>
    </location>
</feature>
<feature type="binding site" evidence="3">
    <location>
        <begin position="89"/>
        <end position="96"/>
    </location>
    <ligand>
        <name>ATP</name>
        <dbReference type="ChEBI" id="CHEBI:30616"/>
    </ligand>
</feature>
<accession>A0A068FIK2</accession>